<comment type="function">
    <text evidence="1">Catalyzes the attachment of valine to tRNA(Val). As ValRS can inadvertently accommodate and process structurally similar amino acids such as threonine, to avoid such errors, it has a 'posttransfer' editing activity that hydrolyzes mischarged Thr-tRNA(Val) in a tRNA-dependent manner.</text>
</comment>
<comment type="catalytic activity">
    <reaction evidence="1">
        <text>tRNA(Val) + L-valine + ATP = L-valyl-tRNA(Val) + AMP + diphosphate</text>
        <dbReference type="Rhea" id="RHEA:10704"/>
        <dbReference type="Rhea" id="RHEA-COMP:9672"/>
        <dbReference type="Rhea" id="RHEA-COMP:9708"/>
        <dbReference type="ChEBI" id="CHEBI:30616"/>
        <dbReference type="ChEBI" id="CHEBI:33019"/>
        <dbReference type="ChEBI" id="CHEBI:57762"/>
        <dbReference type="ChEBI" id="CHEBI:78442"/>
        <dbReference type="ChEBI" id="CHEBI:78537"/>
        <dbReference type="ChEBI" id="CHEBI:456215"/>
        <dbReference type="EC" id="6.1.1.9"/>
    </reaction>
</comment>
<comment type="subunit">
    <text evidence="1">Monomer.</text>
</comment>
<comment type="subcellular location">
    <subcellularLocation>
        <location evidence="1">Cytoplasm</location>
    </subcellularLocation>
</comment>
<comment type="domain">
    <text evidence="1">ValRS has two distinct active sites: one for aminoacylation and one for editing. The misactivated threonine is translocated from the active site to the editing site.</text>
</comment>
<comment type="similarity">
    <text evidence="1">Belongs to the class-I aminoacyl-tRNA synthetase family. ValS type 2 subfamily.</text>
</comment>
<evidence type="ECO:0000255" key="1">
    <source>
        <dbReference type="HAMAP-Rule" id="MF_02005"/>
    </source>
</evidence>
<protein>
    <recommendedName>
        <fullName evidence="1">Valine--tRNA ligase</fullName>
        <ecNumber evidence="1">6.1.1.9</ecNumber>
    </recommendedName>
    <alternativeName>
        <fullName evidence="1">Valyl-tRNA synthetase</fullName>
        <shortName evidence="1">ValRS</shortName>
    </alternativeName>
</protein>
<reference key="1">
    <citation type="journal article" date="2004" name="J. Bacteriol.">
        <title>Complete genome sequence of Rickettsia typhi and comparison with sequences of other Rickettsiae.</title>
        <authorList>
            <person name="McLeod M.P."/>
            <person name="Qin X."/>
            <person name="Karpathy S.E."/>
            <person name="Gioia J."/>
            <person name="Highlander S.K."/>
            <person name="Fox G.E."/>
            <person name="McNeill T.Z."/>
            <person name="Jiang H."/>
            <person name="Muzny D."/>
            <person name="Jacob L.S."/>
            <person name="Hawes A.C."/>
            <person name="Sodergren E."/>
            <person name="Gill R."/>
            <person name="Hume J."/>
            <person name="Morgan M."/>
            <person name="Fan G."/>
            <person name="Amin A.G."/>
            <person name="Gibbs R.A."/>
            <person name="Hong C."/>
            <person name="Yu X.-J."/>
            <person name="Walker D.H."/>
            <person name="Weinstock G.M."/>
        </authorList>
    </citation>
    <scope>NUCLEOTIDE SEQUENCE [LARGE SCALE GENOMIC DNA]</scope>
    <source>
        <strain>ATCC VR-144 / Wilmington</strain>
    </source>
</reference>
<accession>Q68W50</accession>
<sequence>MKEFPKHYNFIENEKKWQHIWQELQIYAYNPNMSKEGIYIVDTPPPTVSGQLHIGHIYSYTQTDFIVRFQRMIGKNIFYPIGFDDNGLPTERLVEKQKQIKAYNMERDEFIKICQEVVQNEEAKFRNLFKQIALSVDWSLEYQTISPLSRKISQMSFLDLLHKGEVYRANQPILWDTVDGTALAQADIEDKQKISSMNYIMFKTEQGDKLTIATTRPELLPACVAVFYHPDDGRYKHLADKSAITPLFNEKVPILADPLVQQDKGTGLVMCCTFGDQTDITWWKSHNLPLKTIITKKGTINFPHKIDLDGLTIKEARTKIIDILKEQNLLTKQEEITQTVKCAERSGAPLEILTVTQWFIKTITHKEALLKRTNELNWYPKNMQMRLENWINSLSWDWCISRQRYFGVPFPIWYSKRIGEEGKILYADISQLPVDPLKDLPIGYSKEEVDPDLDVMDTWATSSVSPQLSTYGISEDFAINKVRHDKLFPMDLRPQAHEIIRTWAFYTILKSHLHQNILPWKNIMVSGWCLAEDRSKMSKSKGNVLVPEKLLERYGADVIRYWSANSKLGADTAYSEDIMKNGKRLVNKLWNAAKFVSIHFDKLTSEDKKVSLCAIKEKITHEFDQWIINKLVALVKLATNALQNYEYANAIYLTEKFFWSIFCDNYLEISKTRSYDEGNKNPQGQYSSILTSYHVMQTLLKLFAPFMPHITEELYQILYSKNSIHIQGNWVNYGDLNYDIDVQGPEGLLTILDIVRKFKAEYNLSIKAPIKLLEVSGIILSTELVEDLKNVTSAEAIQFEMKDDKIKVNIKLFV</sequence>
<proteinExistence type="inferred from homology"/>
<dbReference type="EC" id="6.1.1.9" evidence="1"/>
<dbReference type="EMBL" id="AE017197">
    <property type="protein sequence ID" value="AAU04142.1"/>
    <property type="molecule type" value="Genomic_DNA"/>
</dbReference>
<dbReference type="RefSeq" id="WP_011191119.1">
    <property type="nucleotide sequence ID" value="NC_006142.1"/>
</dbReference>
<dbReference type="SMR" id="Q68W50"/>
<dbReference type="KEGG" id="rty:RT0682"/>
<dbReference type="eggNOG" id="COG0525">
    <property type="taxonomic scope" value="Bacteria"/>
</dbReference>
<dbReference type="HOGENOM" id="CLU_001493_0_2_5"/>
<dbReference type="OrthoDB" id="9810365at2"/>
<dbReference type="Proteomes" id="UP000000604">
    <property type="component" value="Chromosome"/>
</dbReference>
<dbReference type="GO" id="GO:0005829">
    <property type="term" value="C:cytosol"/>
    <property type="evidence" value="ECO:0007669"/>
    <property type="project" value="TreeGrafter"/>
</dbReference>
<dbReference type="GO" id="GO:0002161">
    <property type="term" value="F:aminoacyl-tRNA deacylase activity"/>
    <property type="evidence" value="ECO:0007669"/>
    <property type="project" value="InterPro"/>
</dbReference>
<dbReference type="GO" id="GO:0005524">
    <property type="term" value="F:ATP binding"/>
    <property type="evidence" value="ECO:0007669"/>
    <property type="project" value="UniProtKB-UniRule"/>
</dbReference>
<dbReference type="GO" id="GO:0004832">
    <property type="term" value="F:valine-tRNA ligase activity"/>
    <property type="evidence" value="ECO:0007669"/>
    <property type="project" value="UniProtKB-UniRule"/>
</dbReference>
<dbReference type="GO" id="GO:0006438">
    <property type="term" value="P:valyl-tRNA aminoacylation"/>
    <property type="evidence" value="ECO:0007669"/>
    <property type="project" value="UniProtKB-UniRule"/>
</dbReference>
<dbReference type="CDD" id="cd07962">
    <property type="entry name" value="Anticodon_Ia_Val"/>
    <property type="match status" value="1"/>
</dbReference>
<dbReference type="CDD" id="cd00817">
    <property type="entry name" value="ValRS_core"/>
    <property type="match status" value="1"/>
</dbReference>
<dbReference type="FunFam" id="1.10.730.10:FF:000033">
    <property type="entry name" value="Valine--tRNA ligase"/>
    <property type="match status" value="1"/>
</dbReference>
<dbReference type="FunFam" id="3.40.50.620:FF:000192">
    <property type="entry name" value="Valine--tRNA ligase"/>
    <property type="match status" value="1"/>
</dbReference>
<dbReference type="Gene3D" id="3.40.50.620">
    <property type="entry name" value="HUPs"/>
    <property type="match status" value="2"/>
</dbReference>
<dbReference type="Gene3D" id="1.10.730.10">
    <property type="entry name" value="Isoleucyl-tRNA Synthetase, Domain 1"/>
    <property type="match status" value="1"/>
</dbReference>
<dbReference type="HAMAP" id="MF_02005">
    <property type="entry name" value="Val_tRNA_synth_type2"/>
    <property type="match status" value="1"/>
</dbReference>
<dbReference type="InterPro" id="IPR001412">
    <property type="entry name" value="aa-tRNA-synth_I_CS"/>
</dbReference>
<dbReference type="InterPro" id="IPR002300">
    <property type="entry name" value="aa-tRNA-synth_Ia"/>
</dbReference>
<dbReference type="InterPro" id="IPR033705">
    <property type="entry name" value="Anticodon_Ia_Val"/>
</dbReference>
<dbReference type="InterPro" id="IPR013155">
    <property type="entry name" value="M/V/L/I-tRNA-synth_anticd-bd"/>
</dbReference>
<dbReference type="InterPro" id="IPR014729">
    <property type="entry name" value="Rossmann-like_a/b/a_fold"/>
</dbReference>
<dbReference type="InterPro" id="IPR009080">
    <property type="entry name" value="tRNAsynth_Ia_anticodon-bd"/>
</dbReference>
<dbReference type="InterPro" id="IPR009008">
    <property type="entry name" value="Val/Leu/Ile-tRNA-synth_edit"/>
</dbReference>
<dbReference type="InterPro" id="IPR022874">
    <property type="entry name" value="Valine-tRNA_ligase_type_2"/>
</dbReference>
<dbReference type="InterPro" id="IPR002303">
    <property type="entry name" value="Valyl-tRNA_ligase"/>
</dbReference>
<dbReference type="NCBIfam" id="NF009687">
    <property type="entry name" value="PRK13208.1"/>
    <property type="match status" value="1"/>
</dbReference>
<dbReference type="NCBIfam" id="TIGR00422">
    <property type="entry name" value="valS"/>
    <property type="match status" value="1"/>
</dbReference>
<dbReference type="PANTHER" id="PTHR11946:SF93">
    <property type="entry name" value="VALINE--TRNA LIGASE, CHLOROPLASTIC_MITOCHONDRIAL 2"/>
    <property type="match status" value="1"/>
</dbReference>
<dbReference type="PANTHER" id="PTHR11946">
    <property type="entry name" value="VALYL-TRNA SYNTHETASES"/>
    <property type="match status" value="1"/>
</dbReference>
<dbReference type="Pfam" id="PF08264">
    <property type="entry name" value="Anticodon_1"/>
    <property type="match status" value="1"/>
</dbReference>
<dbReference type="Pfam" id="PF00133">
    <property type="entry name" value="tRNA-synt_1"/>
    <property type="match status" value="1"/>
</dbReference>
<dbReference type="PRINTS" id="PR00986">
    <property type="entry name" value="TRNASYNTHVAL"/>
</dbReference>
<dbReference type="SUPFAM" id="SSF47323">
    <property type="entry name" value="Anticodon-binding domain of a subclass of class I aminoacyl-tRNA synthetases"/>
    <property type="match status" value="1"/>
</dbReference>
<dbReference type="SUPFAM" id="SSF52374">
    <property type="entry name" value="Nucleotidylyl transferase"/>
    <property type="match status" value="1"/>
</dbReference>
<dbReference type="SUPFAM" id="SSF50677">
    <property type="entry name" value="ValRS/IleRS/LeuRS editing domain"/>
    <property type="match status" value="1"/>
</dbReference>
<dbReference type="PROSITE" id="PS00178">
    <property type="entry name" value="AA_TRNA_LIGASE_I"/>
    <property type="match status" value="1"/>
</dbReference>
<gene>
    <name evidence="1" type="primary">valS</name>
    <name type="ordered locus">RT0682</name>
</gene>
<keyword id="KW-0030">Aminoacyl-tRNA synthetase</keyword>
<keyword id="KW-0067">ATP-binding</keyword>
<keyword id="KW-0963">Cytoplasm</keyword>
<keyword id="KW-0436">Ligase</keyword>
<keyword id="KW-0547">Nucleotide-binding</keyword>
<keyword id="KW-0648">Protein biosynthesis</keyword>
<feature type="chain" id="PRO_0000224615" description="Valine--tRNA ligase">
    <location>
        <begin position="1"/>
        <end position="814"/>
    </location>
</feature>
<feature type="short sequence motif" description="'HIGH' region">
    <location>
        <begin position="46"/>
        <end position="56"/>
    </location>
</feature>
<feature type="short sequence motif" description="'KMSKS' region">
    <location>
        <begin position="536"/>
        <end position="540"/>
    </location>
</feature>
<feature type="binding site" evidence="1">
    <location>
        <position position="539"/>
    </location>
    <ligand>
        <name>ATP</name>
        <dbReference type="ChEBI" id="CHEBI:30616"/>
    </ligand>
</feature>
<name>SYV_RICTY</name>
<organism>
    <name type="scientific">Rickettsia typhi (strain ATCC VR-144 / Wilmington)</name>
    <dbReference type="NCBI Taxonomy" id="257363"/>
    <lineage>
        <taxon>Bacteria</taxon>
        <taxon>Pseudomonadati</taxon>
        <taxon>Pseudomonadota</taxon>
        <taxon>Alphaproteobacteria</taxon>
        <taxon>Rickettsiales</taxon>
        <taxon>Rickettsiaceae</taxon>
        <taxon>Rickettsieae</taxon>
        <taxon>Rickettsia</taxon>
        <taxon>typhus group</taxon>
    </lineage>
</organism>